<proteinExistence type="inferred from homology"/>
<reference key="1">
    <citation type="submission" date="2008-03" db="EMBL/GenBank/DDBJ databases">
        <title>Complete sequence of Leptothrix cholodnii SP-6.</title>
        <authorList>
            <consortium name="US DOE Joint Genome Institute"/>
            <person name="Copeland A."/>
            <person name="Lucas S."/>
            <person name="Lapidus A."/>
            <person name="Glavina del Rio T."/>
            <person name="Dalin E."/>
            <person name="Tice H."/>
            <person name="Bruce D."/>
            <person name="Goodwin L."/>
            <person name="Pitluck S."/>
            <person name="Chertkov O."/>
            <person name="Brettin T."/>
            <person name="Detter J.C."/>
            <person name="Han C."/>
            <person name="Kuske C.R."/>
            <person name="Schmutz J."/>
            <person name="Larimer F."/>
            <person name="Land M."/>
            <person name="Hauser L."/>
            <person name="Kyrpides N."/>
            <person name="Lykidis A."/>
            <person name="Emerson D."/>
            <person name="Richardson P."/>
        </authorList>
    </citation>
    <scope>NUCLEOTIDE SEQUENCE [LARGE SCALE GENOMIC DNA]</scope>
    <source>
        <strain>ATCC 51168 / LMG 8142 / SP-6</strain>
    </source>
</reference>
<protein>
    <recommendedName>
        <fullName evidence="1">Cell division topological specificity factor</fullName>
    </recommendedName>
</protein>
<accession>B1Y580</accession>
<comment type="function">
    <text evidence="1">Prevents the cell division inhibition by proteins MinC and MinD at internal division sites while permitting inhibition at polar sites. This ensures cell division at the proper site by restricting the formation of a division septum at the midpoint of the long axis of the cell.</text>
</comment>
<comment type="similarity">
    <text evidence="1">Belongs to the MinE family.</text>
</comment>
<organism>
    <name type="scientific">Leptothrix cholodnii (strain ATCC 51168 / LMG 8142 / SP-6)</name>
    <name type="common">Leptothrix discophora (strain SP-6)</name>
    <dbReference type="NCBI Taxonomy" id="395495"/>
    <lineage>
        <taxon>Bacteria</taxon>
        <taxon>Pseudomonadati</taxon>
        <taxon>Pseudomonadota</taxon>
        <taxon>Betaproteobacteria</taxon>
        <taxon>Burkholderiales</taxon>
        <taxon>Sphaerotilaceae</taxon>
        <taxon>Leptothrix</taxon>
    </lineage>
</organism>
<evidence type="ECO:0000255" key="1">
    <source>
        <dbReference type="HAMAP-Rule" id="MF_00262"/>
    </source>
</evidence>
<keyword id="KW-0131">Cell cycle</keyword>
<keyword id="KW-0132">Cell division</keyword>
<keyword id="KW-1185">Reference proteome</keyword>
<dbReference type="EMBL" id="CP001013">
    <property type="protein sequence ID" value="ACB32310.1"/>
    <property type="molecule type" value="Genomic_DNA"/>
</dbReference>
<dbReference type="RefSeq" id="WP_012345072.1">
    <property type="nucleotide sequence ID" value="NC_010524.1"/>
</dbReference>
<dbReference type="SMR" id="B1Y580"/>
<dbReference type="STRING" id="395495.Lcho_0034"/>
<dbReference type="KEGG" id="lch:Lcho_0034"/>
<dbReference type="eggNOG" id="COG0851">
    <property type="taxonomic scope" value="Bacteria"/>
</dbReference>
<dbReference type="HOGENOM" id="CLU_137929_2_1_4"/>
<dbReference type="OrthoDB" id="9802655at2"/>
<dbReference type="Proteomes" id="UP000001693">
    <property type="component" value="Chromosome"/>
</dbReference>
<dbReference type="GO" id="GO:0051301">
    <property type="term" value="P:cell division"/>
    <property type="evidence" value="ECO:0007669"/>
    <property type="project" value="UniProtKB-KW"/>
</dbReference>
<dbReference type="GO" id="GO:0032955">
    <property type="term" value="P:regulation of division septum assembly"/>
    <property type="evidence" value="ECO:0007669"/>
    <property type="project" value="InterPro"/>
</dbReference>
<dbReference type="FunFam" id="3.30.1070.10:FF:000001">
    <property type="entry name" value="Cell division topological specificity factor"/>
    <property type="match status" value="1"/>
</dbReference>
<dbReference type="Gene3D" id="3.30.1070.10">
    <property type="entry name" value="Cell division topological specificity factor MinE"/>
    <property type="match status" value="1"/>
</dbReference>
<dbReference type="HAMAP" id="MF_00262">
    <property type="entry name" value="MinE"/>
    <property type="match status" value="1"/>
</dbReference>
<dbReference type="InterPro" id="IPR005527">
    <property type="entry name" value="MinE"/>
</dbReference>
<dbReference type="InterPro" id="IPR036707">
    <property type="entry name" value="MinE_sf"/>
</dbReference>
<dbReference type="NCBIfam" id="TIGR01215">
    <property type="entry name" value="minE"/>
    <property type="match status" value="1"/>
</dbReference>
<dbReference type="NCBIfam" id="NF001422">
    <property type="entry name" value="PRK00296.1"/>
    <property type="match status" value="1"/>
</dbReference>
<dbReference type="NCBIfam" id="NF010595">
    <property type="entry name" value="PRK13989.1"/>
    <property type="match status" value="1"/>
</dbReference>
<dbReference type="Pfam" id="PF03776">
    <property type="entry name" value="MinE"/>
    <property type="match status" value="1"/>
</dbReference>
<dbReference type="SUPFAM" id="SSF55229">
    <property type="entry name" value="Cell division protein MinE topological specificity domain"/>
    <property type="match status" value="1"/>
</dbReference>
<gene>
    <name evidence="1" type="primary">minE</name>
    <name type="ordered locus">Lcho_0034</name>
</gene>
<sequence length="87" mass="9863">MSLLSFLIGEKKSTASVAKERLQIILAHERSGRNASRPDYLPALQRELLAVISKYVSIEPGDIKVHLERQDNLEVLEVKIELPDVQR</sequence>
<name>MINE_LEPCP</name>
<feature type="chain" id="PRO_1000114228" description="Cell division topological specificity factor">
    <location>
        <begin position="1"/>
        <end position="87"/>
    </location>
</feature>